<evidence type="ECO:0000250" key="1"/>
<evidence type="ECO:0000255" key="2">
    <source>
        <dbReference type="HAMAP-Rule" id="MF_00492"/>
    </source>
</evidence>
<proteinExistence type="inferred from homology"/>
<comment type="function">
    <text evidence="2">Transaldolase is important for the balance of metabolites in the pentose-phosphate pathway.</text>
</comment>
<comment type="catalytic activity">
    <reaction evidence="2">
        <text>D-sedoheptulose 7-phosphate + D-glyceraldehyde 3-phosphate = D-erythrose 4-phosphate + beta-D-fructose 6-phosphate</text>
        <dbReference type="Rhea" id="RHEA:17053"/>
        <dbReference type="ChEBI" id="CHEBI:16897"/>
        <dbReference type="ChEBI" id="CHEBI:57483"/>
        <dbReference type="ChEBI" id="CHEBI:57634"/>
        <dbReference type="ChEBI" id="CHEBI:59776"/>
        <dbReference type="EC" id="2.2.1.2"/>
    </reaction>
</comment>
<comment type="pathway">
    <text evidence="2">Carbohydrate degradation; pentose phosphate pathway; D-glyceraldehyde 3-phosphate and beta-D-fructose 6-phosphate from D-ribose 5-phosphate and D-xylulose 5-phosphate (non-oxidative stage): step 2/3.</text>
</comment>
<comment type="subunit">
    <text evidence="1">Homodimer.</text>
</comment>
<comment type="subcellular location">
    <subcellularLocation>
        <location evidence="2">Cytoplasm</location>
    </subcellularLocation>
</comment>
<comment type="similarity">
    <text evidence="2">Belongs to the transaldolase family. Type 1 subfamily.</text>
</comment>
<feature type="initiator methionine" description="Removed" evidence="1">
    <location>
        <position position="1"/>
    </location>
</feature>
<feature type="chain" id="PRO_0000173614" description="Transaldolase B">
    <location>
        <begin position="2"/>
        <end position="317"/>
    </location>
</feature>
<feature type="active site" description="Schiff-base intermediate with substrate" evidence="2">
    <location>
        <position position="132"/>
    </location>
</feature>
<gene>
    <name evidence="2" type="primary">talB</name>
    <name type="ordered locus">STY0007</name>
    <name type="ordered locus">t0007</name>
</gene>
<keyword id="KW-0963">Cytoplasm</keyword>
<keyword id="KW-0570">Pentose shunt</keyword>
<keyword id="KW-0704">Schiff base</keyword>
<keyword id="KW-0808">Transferase</keyword>
<accession>P66956</accession>
<accession>Q8XG45</accession>
<sequence>MTDKLTSLRQFTTVVADTGDIAAMKLYQPQDATTNPSLILNAAQIPEYRKLIDDAVAWAKQQSSDRAQQVVDATDKLAVNIGLEILKLVPGRISTEVDARLSYDTEASIAKAKRIIKLYNDAGISNDRILIKLASTWQGIRAAEQLEKEGINCNLTLLFSFAQARACAEAGVYLISPFVGRILDWYKANTDKKDYAPAEDPGVVSVTEIYEYYKQHGYETVVMGASFRNVGEILELAGCDRLTIAPALLKELAESEGAIERKLSFSGEVKARPERITEAEFLWQHHQDPMAVDKLADGIRKFAVDQEKLEKMIGDLL</sequence>
<protein>
    <recommendedName>
        <fullName evidence="2">Transaldolase B</fullName>
        <ecNumber evidence="2">2.2.1.2</ecNumber>
    </recommendedName>
</protein>
<reference key="1">
    <citation type="journal article" date="2001" name="Nature">
        <title>Complete genome sequence of a multiple drug resistant Salmonella enterica serovar Typhi CT18.</title>
        <authorList>
            <person name="Parkhill J."/>
            <person name="Dougan G."/>
            <person name="James K.D."/>
            <person name="Thomson N.R."/>
            <person name="Pickard D."/>
            <person name="Wain J."/>
            <person name="Churcher C.M."/>
            <person name="Mungall K.L."/>
            <person name="Bentley S.D."/>
            <person name="Holden M.T.G."/>
            <person name="Sebaihia M."/>
            <person name="Baker S."/>
            <person name="Basham D."/>
            <person name="Brooks K."/>
            <person name="Chillingworth T."/>
            <person name="Connerton P."/>
            <person name="Cronin A."/>
            <person name="Davis P."/>
            <person name="Davies R.M."/>
            <person name="Dowd L."/>
            <person name="White N."/>
            <person name="Farrar J."/>
            <person name="Feltwell T."/>
            <person name="Hamlin N."/>
            <person name="Haque A."/>
            <person name="Hien T.T."/>
            <person name="Holroyd S."/>
            <person name="Jagels K."/>
            <person name="Krogh A."/>
            <person name="Larsen T.S."/>
            <person name="Leather S."/>
            <person name="Moule S."/>
            <person name="O'Gaora P."/>
            <person name="Parry C."/>
            <person name="Quail M.A."/>
            <person name="Rutherford K.M."/>
            <person name="Simmonds M."/>
            <person name="Skelton J."/>
            <person name="Stevens K."/>
            <person name="Whitehead S."/>
            <person name="Barrell B.G."/>
        </authorList>
    </citation>
    <scope>NUCLEOTIDE SEQUENCE [LARGE SCALE GENOMIC DNA]</scope>
    <source>
        <strain>CT18</strain>
    </source>
</reference>
<reference key="2">
    <citation type="journal article" date="2003" name="J. Bacteriol.">
        <title>Comparative genomics of Salmonella enterica serovar Typhi strains Ty2 and CT18.</title>
        <authorList>
            <person name="Deng W."/>
            <person name="Liou S.-R."/>
            <person name="Plunkett G. III"/>
            <person name="Mayhew G.F."/>
            <person name="Rose D.J."/>
            <person name="Burland V."/>
            <person name="Kodoyianni V."/>
            <person name="Schwartz D.C."/>
            <person name="Blattner F.R."/>
        </authorList>
    </citation>
    <scope>NUCLEOTIDE SEQUENCE [LARGE SCALE GENOMIC DNA]</scope>
    <source>
        <strain>ATCC 700931 / Ty2</strain>
    </source>
</reference>
<name>TALB_SALTI</name>
<dbReference type="EC" id="2.2.1.2" evidence="2"/>
<dbReference type="EMBL" id="AL513382">
    <property type="protein sequence ID" value="CAD01160.1"/>
    <property type="molecule type" value="Genomic_DNA"/>
</dbReference>
<dbReference type="EMBL" id="AE014613">
    <property type="protein sequence ID" value="AAO67741.1"/>
    <property type="molecule type" value="Genomic_DNA"/>
</dbReference>
<dbReference type="RefSeq" id="NP_454617.1">
    <property type="nucleotide sequence ID" value="NC_003198.1"/>
</dbReference>
<dbReference type="SMR" id="P66956"/>
<dbReference type="STRING" id="220341.gene:17584062"/>
<dbReference type="KEGG" id="stt:t0007"/>
<dbReference type="KEGG" id="sty:STY0007"/>
<dbReference type="PATRIC" id="fig|220341.7.peg.6"/>
<dbReference type="eggNOG" id="COG0176">
    <property type="taxonomic scope" value="Bacteria"/>
</dbReference>
<dbReference type="HOGENOM" id="CLU_047470_0_1_6"/>
<dbReference type="OMA" id="THAEFLW"/>
<dbReference type="OrthoDB" id="9809101at2"/>
<dbReference type="UniPathway" id="UPA00115">
    <property type="reaction ID" value="UER00414"/>
</dbReference>
<dbReference type="Proteomes" id="UP000000541">
    <property type="component" value="Chromosome"/>
</dbReference>
<dbReference type="Proteomes" id="UP000002670">
    <property type="component" value="Chromosome"/>
</dbReference>
<dbReference type="GO" id="GO:0005829">
    <property type="term" value="C:cytosol"/>
    <property type="evidence" value="ECO:0007669"/>
    <property type="project" value="TreeGrafter"/>
</dbReference>
<dbReference type="GO" id="GO:0004801">
    <property type="term" value="F:transaldolase activity"/>
    <property type="evidence" value="ECO:0000250"/>
    <property type="project" value="UniProtKB"/>
</dbReference>
<dbReference type="GO" id="GO:0005975">
    <property type="term" value="P:carbohydrate metabolic process"/>
    <property type="evidence" value="ECO:0007669"/>
    <property type="project" value="InterPro"/>
</dbReference>
<dbReference type="GO" id="GO:0006098">
    <property type="term" value="P:pentose-phosphate shunt"/>
    <property type="evidence" value="ECO:0007669"/>
    <property type="project" value="UniProtKB-UniRule"/>
</dbReference>
<dbReference type="CDD" id="cd00957">
    <property type="entry name" value="Transaldolase_TalAB"/>
    <property type="match status" value="1"/>
</dbReference>
<dbReference type="FunFam" id="3.20.20.70:FF:000002">
    <property type="entry name" value="Transaldolase"/>
    <property type="match status" value="1"/>
</dbReference>
<dbReference type="Gene3D" id="3.20.20.70">
    <property type="entry name" value="Aldolase class I"/>
    <property type="match status" value="1"/>
</dbReference>
<dbReference type="HAMAP" id="MF_00492">
    <property type="entry name" value="Transaldolase_1"/>
    <property type="match status" value="1"/>
</dbReference>
<dbReference type="InterPro" id="IPR013785">
    <property type="entry name" value="Aldolase_TIM"/>
</dbReference>
<dbReference type="InterPro" id="IPR001585">
    <property type="entry name" value="TAL/FSA"/>
</dbReference>
<dbReference type="InterPro" id="IPR004730">
    <property type="entry name" value="Transaldolase_1"/>
</dbReference>
<dbReference type="InterPro" id="IPR018225">
    <property type="entry name" value="Transaldolase_AS"/>
</dbReference>
<dbReference type="NCBIfam" id="NF009001">
    <property type="entry name" value="PRK12346.1"/>
    <property type="match status" value="1"/>
</dbReference>
<dbReference type="NCBIfam" id="TIGR00874">
    <property type="entry name" value="talAB"/>
    <property type="match status" value="1"/>
</dbReference>
<dbReference type="PANTHER" id="PTHR10683">
    <property type="entry name" value="TRANSALDOLASE"/>
    <property type="match status" value="1"/>
</dbReference>
<dbReference type="PANTHER" id="PTHR10683:SF18">
    <property type="entry name" value="TRANSALDOLASE"/>
    <property type="match status" value="1"/>
</dbReference>
<dbReference type="Pfam" id="PF00923">
    <property type="entry name" value="TAL_FSA"/>
    <property type="match status" value="1"/>
</dbReference>
<dbReference type="SUPFAM" id="SSF51569">
    <property type="entry name" value="Aldolase"/>
    <property type="match status" value="1"/>
</dbReference>
<dbReference type="PROSITE" id="PS01054">
    <property type="entry name" value="TRANSALDOLASE_1"/>
    <property type="match status" value="1"/>
</dbReference>
<dbReference type="PROSITE" id="PS00958">
    <property type="entry name" value="TRANSALDOLASE_2"/>
    <property type="match status" value="1"/>
</dbReference>
<organism>
    <name type="scientific">Salmonella typhi</name>
    <dbReference type="NCBI Taxonomy" id="90370"/>
    <lineage>
        <taxon>Bacteria</taxon>
        <taxon>Pseudomonadati</taxon>
        <taxon>Pseudomonadota</taxon>
        <taxon>Gammaproteobacteria</taxon>
        <taxon>Enterobacterales</taxon>
        <taxon>Enterobacteriaceae</taxon>
        <taxon>Salmonella</taxon>
    </lineage>
</organism>